<feature type="chain" id="PRO_0000319848" description="Capsid protein">
    <location>
        <begin position="1"/>
        <end position="247"/>
    </location>
</feature>
<feature type="region of interest" description="DNA-binding" evidence="1">
    <location>
        <begin position="1"/>
        <end position="40"/>
    </location>
</feature>
<feature type="region of interest" description="Nuclear localization signals" evidence="2">
    <location>
        <begin position="15"/>
        <end position="44"/>
    </location>
</feature>
<organism>
    <name type="scientific">Beak and feather disease virus</name>
    <name type="common">BFDV</name>
    <dbReference type="NCBI Taxonomy" id="77856"/>
    <lineage>
        <taxon>Viruses</taxon>
        <taxon>Monodnaviria</taxon>
        <taxon>Shotokuvirae</taxon>
        <taxon>Cressdnaviricota</taxon>
        <taxon>Arfiviricetes</taxon>
        <taxon>Cirlivirales</taxon>
        <taxon>Circoviridae</taxon>
        <taxon>Circovirus</taxon>
        <taxon>Circovirus parrot</taxon>
    </lineage>
</organism>
<keyword id="KW-0167">Capsid protein</keyword>
<keyword id="KW-0238">DNA-binding</keyword>
<keyword id="KW-1048">Host nucleus</keyword>
<keyword id="KW-0945">Host-virus interaction</keyword>
<keyword id="KW-1185">Reference proteome</keyword>
<keyword id="KW-1140">T=1 icosahedral capsid protein</keyword>
<keyword id="KW-1161">Viral attachment to host cell</keyword>
<keyword id="KW-1162">Viral penetration into host cytoplasm</keyword>
<keyword id="KW-1163">Viral penetration into host nucleus</keyword>
<keyword id="KW-0946">Virion</keyword>
<keyword id="KW-1164">Virus endocytosis by host</keyword>
<keyword id="KW-1160">Virus entry into host cell</keyword>
<comment type="function">
    <text evidence="3">Self-assembles to form the virion icosahedral capsid with a T=1 symmetry. This very small capsid (17 - 22 nm in diameter) allows the virus to be very stable in the environment and resistant to some disinfectants, including detergents. Essential for the initial attachment to heparan sulfate moieties and chondroitin sulfate B of the host cell surface proteoglycans. After attachment, the virus is endocytosed and traffics to the nucleus. The capsid protein binds and transports the viral genome and Rep across the nuclear envelope.</text>
</comment>
<comment type="subunit">
    <text evidence="1 3">Homomultimer. Assembles in the nucleus, presumably in an immature form, then migrates to the cytoplasm once assembled as mature virion (By similarity). Interacts with Rep; this interaction relocates Rep into the nucleus.</text>
</comment>
<comment type="subcellular location">
    <subcellularLocation>
        <location evidence="3">Host nucleus</location>
    </subcellularLocation>
    <subcellularLocation>
        <location evidence="4">Virion</location>
    </subcellularLocation>
</comment>
<comment type="similarity">
    <text evidence="4">Belongs to the circoviridae capsid protein family.</text>
</comment>
<name>CAPSD_BFDV</name>
<dbReference type="EMBL" id="AF080560">
    <property type="protein sequence ID" value="AAC69862.1"/>
    <property type="molecule type" value="Genomic_DNA"/>
</dbReference>
<dbReference type="SMR" id="Q9YUC8"/>
<dbReference type="Proteomes" id="UP000007454">
    <property type="component" value="Genome"/>
</dbReference>
<dbReference type="GO" id="GO:0043657">
    <property type="term" value="C:host cell"/>
    <property type="evidence" value="ECO:0007669"/>
    <property type="project" value="GOC"/>
</dbReference>
<dbReference type="GO" id="GO:0042025">
    <property type="term" value="C:host cell nucleus"/>
    <property type="evidence" value="ECO:0007669"/>
    <property type="project" value="UniProtKB-SubCell"/>
</dbReference>
<dbReference type="GO" id="GO:0039615">
    <property type="term" value="C:T=1 icosahedral viral capsid"/>
    <property type="evidence" value="ECO:0007669"/>
    <property type="project" value="UniProtKB-KW"/>
</dbReference>
<dbReference type="GO" id="GO:0003677">
    <property type="term" value="F:DNA binding"/>
    <property type="evidence" value="ECO:0007669"/>
    <property type="project" value="UniProtKB-KW"/>
</dbReference>
<dbReference type="GO" id="GO:0075509">
    <property type="term" value="P:endocytosis involved in viral entry into host cell"/>
    <property type="evidence" value="ECO:0007669"/>
    <property type="project" value="UniProtKB-KW"/>
</dbReference>
<dbReference type="GO" id="GO:0019069">
    <property type="term" value="P:viral capsid assembly"/>
    <property type="evidence" value="ECO:0007669"/>
    <property type="project" value="InterPro"/>
</dbReference>
<dbReference type="GO" id="GO:0075732">
    <property type="term" value="P:viral penetration into host nucleus"/>
    <property type="evidence" value="ECO:0007669"/>
    <property type="project" value="UniProtKB-KW"/>
</dbReference>
<dbReference type="GO" id="GO:0019062">
    <property type="term" value="P:virion attachment to host cell"/>
    <property type="evidence" value="ECO:0007669"/>
    <property type="project" value="UniProtKB-KW"/>
</dbReference>
<dbReference type="Gene3D" id="2.60.120.950">
    <property type="entry name" value="Circovirus capsid protein"/>
    <property type="match status" value="1"/>
</dbReference>
<dbReference type="InterPro" id="IPR003383">
    <property type="entry name" value="Circovirus_capsid"/>
</dbReference>
<dbReference type="InterPro" id="IPR038652">
    <property type="entry name" value="Circovirus_capsid_sf"/>
</dbReference>
<dbReference type="Pfam" id="PF02443">
    <property type="entry name" value="Circo_capsid"/>
    <property type="match status" value="1"/>
</dbReference>
<evidence type="ECO:0000250" key="1"/>
<evidence type="ECO:0000255" key="2"/>
<evidence type="ECO:0000269" key="3">
    <source>
    </source>
</evidence>
<evidence type="ECO:0000305" key="4"/>
<gene>
    <name type="primary">Cap</name>
    <name type="ORF">ORF2</name>
</gene>
<proteinExistence type="evidence at protein level"/>
<reference key="1">
    <citation type="journal article" date="1998" name="Virology">
        <title>Psittacine beak and feather disease virus nucleotide sequence analysis and its relationship to porcine circovirus, plant circoviruses, and chicken anaemia virus.</title>
        <authorList>
            <person name="Bassami M.R."/>
            <person name="Berryman D."/>
            <person name="Wilcox G.E."/>
            <person name="Raidal S.R."/>
        </authorList>
    </citation>
    <scope>NUCLEOTIDE SEQUENCE [GENOMIC DNA]</scope>
</reference>
<reference key="2">
    <citation type="journal article" date="2006" name="J. Virol.">
        <title>The capsid protein of beak and feather disease virus binds to the viral DNA and is responsible for transporting the replication-associated protein into the nucleus.</title>
        <authorList>
            <person name="Heath L."/>
            <person name="Williamson A.L."/>
            <person name="Rybicki E.P."/>
        </authorList>
    </citation>
    <scope>FUNCTION</scope>
    <scope>SUBCELLULAR LOCATION</scope>
    <scope>INTERACTION WITH REP</scope>
    <scope>DNA-BINDING</scope>
</reference>
<organismHost>
    <name type="scientific">Gracula</name>
    <dbReference type="NCBI Taxonomy" id="116991"/>
</organismHost>
<organismHost>
    <name type="scientific">Psittaciformes</name>
    <dbReference type="NCBI Taxonomy" id="9223"/>
</organismHost>
<sequence>MWGTSNCACAKFQIRRRYARPYRRRHIRRYRRRRRHFRRRRFTTNRVYTLRLTRQFQFKIQKQTTSVGNLIFNADYITFALDDFLQAVPNPHALNFEDYRIKLAKMEMRPTGGHYTVQSNGFGHTAVIQDSRITKFKTTADQTQDPLAPFDGAKKWFVSRGFKRLLRPKPQITIEDLTTANQSAALWLNSARTGWIPLQGGPNSAGTKVRHYGIAFSFPQPEQTITYVTKLTLYVQFRQFAPNNPST</sequence>
<accession>Q9YUC8</accession>
<protein>
    <recommendedName>
        <fullName>Capsid protein</fullName>
    </recommendedName>
</protein>